<geneLocation type="plasmid">
    <name>pSymB</name>
    <name>megaplasmid 2</name>
</geneLocation>
<reference key="1">
    <citation type="journal article" date="2001" name="Proc. Natl. Acad. Sci. U.S.A.">
        <title>The complete sequence of the 1,683-kb pSymB megaplasmid from the N2-fixing endosymbiont Sinorhizobium meliloti.</title>
        <authorList>
            <person name="Finan T.M."/>
            <person name="Weidner S."/>
            <person name="Wong K."/>
            <person name="Buhrmester J."/>
            <person name="Chain P."/>
            <person name="Vorhoelter F.J."/>
            <person name="Hernandez-Lucas I."/>
            <person name="Becker A."/>
            <person name="Cowie A."/>
            <person name="Gouzy J."/>
            <person name="Golding B."/>
            <person name="Puehler A."/>
        </authorList>
    </citation>
    <scope>NUCLEOTIDE SEQUENCE [LARGE SCALE GENOMIC DNA]</scope>
    <source>
        <strain>1021</strain>
    </source>
</reference>
<reference key="2">
    <citation type="journal article" date="2001" name="Science">
        <title>The composite genome of the legume symbiont Sinorhizobium meliloti.</title>
        <authorList>
            <person name="Galibert F."/>
            <person name="Finan T.M."/>
            <person name="Long S.R."/>
            <person name="Puehler A."/>
            <person name="Abola P."/>
            <person name="Ampe F."/>
            <person name="Barloy-Hubler F."/>
            <person name="Barnett M.J."/>
            <person name="Becker A."/>
            <person name="Boistard P."/>
            <person name="Bothe G."/>
            <person name="Boutry M."/>
            <person name="Bowser L."/>
            <person name="Buhrmester J."/>
            <person name="Cadieu E."/>
            <person name="Capela D."/>
            <person name="Chain P."/>
            <person name="Cowie A."/>
            <person name="Davis R.W."/>
            <person name="Dreano S."/>
            <person name="Federspiel N.A."/>
            <person name="Fisher R.F."/>
            <person name="Gloux S."/>
            <person name="Godrie T."/>
            <person name="Goffeau A."/>
            <person name="Golding B."/>
            <person name="Gouzy J."/>
            <person name="Gurjal M."/>
            <person name="Hernandez-Lucas I."/>
            <person name="Hong A."/>
            <person name="Huizar L."/>
            <person name="Hyman R.W."/>
            <person name="Jones T."/>
            <person name="Kahn D."/>
            <person name="Kahn M.L."/>
            <person name="Kalman S."/>
            <person name="Keating D.H."/>
            <person name="Kiss E."/>
            <person name="Komp C."/>
            <person name="Lelaure V."/>
            <person name="Masuy D."/>
            <person name="Palm C."/>
            <person name="Peck M.C."/>
            <person name="Pohl T.M."/>
            <person name="Portetelle D."/>
            <person name="Purnelle B."/>
            <person name="Ramsperger U."/>
            <person name="Surzycki R."/>
            <person name="Thebault P."/>
            <person name="Vandenbol M."/>
            <person name="Vorhoelter F.J."/>
            <person name="Weidner S."/>
            <person name="Wells D.H."/>
            <person name="Wong K."/>
            <person name="Yeh K.-C."/>
            <person name="Batut J."/>
        </authorList>
    </citation>
    <scope>NUCLEOTIDE SEQUENCE [LARGE SCALE GENOMIC DNA]</scope>
    <source>
        <strain>1021</strain>
    </source>
</reference>
<reference key="3">
    <citation type="submission" date="1992-11" db="EMBL/GenBank/DDBJ databases">
        <title>Characterization of a gene cluster involved in utilization of glyphosate and other phosphonates in Rhizobium meliloti.</title>
        <authorList>
            <person name="McLean P.A."/>
            <person name="Liu C.M."/>
            <person name="Sookdeo C.C."/>
            <person name="Cannon F.C."/>
        </authorList>
    </citation>
    <scope>NUCLEOTIDE SEQUENCE [GENOMIC DNA] OF 35-156</scope>
    <source>
        <strain>1021</strain>
    </source>
</reference>
<gene>
    <name type="primary">phnG</name>
    <name type="ordered locus">RB1451</name>
    <name type="ORF">SMb20759</name>
</gene>
<organism>
    <name type="scientific">Rhizobium meliloti (strain 1021)</name>
    <name type="common">Ensifer meliloti</name>
    <name type="synonym">Sinorhizobium meliloti</name>
    <dbReference type="NCBI Taxonomy" id="266834"/>
    <lineage>
        <taxon>Bacteria</taxon>
        <taxon>Pseudomonadati</taxon>
        <taxon>Pseudomonadota</taxon>
        <taxon>Alphaproteobacteria</taxon>
        <taxon>Hyphomicrobiales</taxon>
        <taxon>Rhizobiaceae</taxon>
        <taxon>Sinorhizobium/Ensifer group</taxon>
        <taxon>Sinorhizobium</taxon>
    </lineage>
</organism>
<sequence length="156" mass="16616">MMDAAKTSDDAGVAQRREGMRLLARATLGELSLAWDAIDDKPEVAPVRGPETGLVMVRGKIGGGGDPFNLGEATVSRATVRLSTGEVGHGQLLGTDKARARLAAIFDALFQSAAHRASVEALHEQVAARLDAEDRRKAEETAATRVDFFTMVRGED</sequence>
<evidence type="ECO:0000250" key="1"/>
<evidence type="ECO:0000305" key="2"/>
<keyword id="KW-0614">Plasmid</keyword>
<keyword id="KW-1185">Reference proteome</keyword>
<keyword id="KW-0808">Transferase</keyword>
<comment type="function">
    <text evidence="1">Together with PhnH, PhnI and PhnL is required for the transfer of the ribose triphosphate moiety from ATP to methyl phosphonate.</text>
</comment>
<comment type="catalytic activity">
    <reaction>
        <text>methylphosphonate + ATP = alpha-D-ribose 1-methylphosphonate 5-triphosphate + adenine</text>
        <dbReference type="Rhea" id="RHEA:34679"/>
        <dbReference type="ChEBI" id="CHEBI:16708"/>
        <dbReference type="ChEBI" id="CHEBI:30616"/>
        <dbReference type="ChEBI" id="CHEBI:68684"/>
        <dbReference type="ChEBI" id="CHEBI:68823"/>
        <dbReference type="EC" id="2.7.8.37"/>
    </reaction>
</comment>
<comment type="similarity">
    <text evidence="2">Belongs to the PhnG family.</text>
</comment>
<protein>
    <recommendedName>
        <fullName>Alpha-D-ribose 1-methylphosphonate 5-triphosphate synthase subunit PhnG</fullName>
        <shortName>RPnTP synthase subunit PhnG</shortName>
        <ecNumber>2.7.8.37</ecNumber>
    </recommendedName>
</protein>
<dbReference type="EC" id="2.7.8.37"/>
<dbReference type="EMBL" id="AL591985">
    <property type="protein sequence ID" value="CAC49851.1"/>
    <property type="molecule type" value="Genomic_DNA"/>
</dbReference>
<dbReference type="EMBL" id="M96263">
    <property type="protein sequence ID" value="AAA26350.1"/>
    <property type="molecule type" value="Genomic_DNA"/>
</dbReference>
<dbReference type="PIR" id="C96023">
    <property type="entry name" value="C96023"/>
</dbReference>
<dbReference type="RefSeq" id="NP_437991.1">
    <property type="nucleotide sequence ID" value="NC_003078.1"/>
</dbReference>
<dbReference type="SMR" id="Q52984"/>
<dbReference type="EnsemblBacteria" id="CAC49851">
    <property type="protein sequence ID" value="CAC49851"/>
    <property type="gene ID" value="SM_b20759"/>
</dbReference>
<dbReference type="KEGG" id="sme:SM_b20759"/>
<dbReference type="PATRIC" id="fig|266834.11.peg.6377"/>
<dbReference type="eggNOG" id="COG3624">
    <property type="taxonomic scope" value="Bacteria"/>
</dbReference>
<dbReference type="HOGENOM" id="CLU_109242_0_0_5"/>
<dbReference type="OrthoDB" id="530475at2"/>
<dbReference type="Proteomes" id="UP000001976">
    <property type="component" value="Plasmid pSymB"/>
</dbReference>
<dbReference type="GO" id="GO:0061693">
    <property type="term" value="F:alpha-D-ribose 1-methylphosphonate 5-triphosphate synthase activity"/>
    <property type="evidence" value="ECO:0007669"/>
    <property type="project" value="UniProtKB-EC"/>
</dbReference>
<dbReference type="GO" id="GO:0019634">
    <property type="term" value="P:organic phosphonate metabolic process"/>
    <property type="evidence" value="ECO:0007669"/>
    <property type="project" value="InterPro"/>
</dbReference>
<dbReference type="GO" id="GO:0015716">
    <property type="term" value="P:organic phosphonate transport"/>
    <property type="evidence" value="ECO:0007669"/>
    <property type="project" value="InterPro"/>
</dbReference>
<dbReference type="InterPro" id="IPR009609">
    <property type="entry name" value="Phosphonate_metab_PhnG"/>
</dbReference>
<dbReference type="NCBIfam" id="TIGR03293">
    <property type="entry name" value="PhnG_redo"/>
    <property type="match status" value="1"/>
</dbReference>
<dbReference type="Pfam" id="PF06754">
    <property type="entry name" value="PhnG"/>
    <property type="match status" value="1"/>
</dbReference>
<feature type="chain" id="PRO_0000058392" description="Alpha-D-ribose 1-methylphosphonate 5-triphosphate synthase subunit PhnG">
    <location>
        <begin position="1"/>
        <end position="156"/>
    </location>
</feature>
<name>PHNG_RHIME</name>
<proteinExistence type="inferred from homology"/>
<accession>Q52984</accession>